<evidence type="ECO:0000255" key="1">
    <source>
        <dbReference type="HAMAP-Rule" id="MF_04066"/>
    </source>
</evidence>
<evidence type="ECO:0000256" key="2">
    <source>
        <dbReference type="SAM" id="MobiDB-lite"/>
    </source>
</evidence>
<dbReference type="EMBL" id="DQ321159">
    <property type="protein sequence ID" value="ABC68544.1"/>
    <property type="molecule type" value="Genomic_RNA"/>
</dbReference>
<dbReference type="SMR" id="Q2F4N6"/>
<dbReference type="GO" id="GO:0030430">
    <property type="term" value="C:host cell cytoplasm"/>
    <property type="evidence" value="ECO:0007669"/>
    <property type="project" value="UniProtKB-SubCell"/>
</dbReference>
<dbReference type="GO" id="GO:0042025">
    <property type="term" value="C:host cell nucleus"/>
    <property type="evidence" value="ECO:0007669"/>
    <property type="project" value="UniProtKB-SubCell"/>
</dbReference>
<dbReference type="GO" id="GO:0030291">
    <property type="term" value="F:protein serine/threonine kinase inhibitor activity"/>
    <property type="evidence" value="ECO:0007669"/>
    <property type="project" value="UniProtKB-KW"/>
</dbReference>
<dbReference type="GO" id="GO:0003723">
    <property type="term" value="F:RNA binding"/>
    <property type="evidence" value="ECO:0007669"/>
    <property type="project" value="UniProtKB-KW"/>
</dbReference>
<dbReference type="GO" id="GO:0039540">
    <property type="term" value="P:symbiont-mediated suppression of host cytoplasmic pattern recognition receptor signaling pathway via inhibition of RIG-I activity"/>
    <property type="evidence" value="ECO:0007669"/>
    <property type="project" value="UniProtKB-KW"/>
</dbReference>
<dbReference type="GO" id="GO:0039657">
    <property type="term" value="P:symbiont-mediated suppression of host gene expression"/>
    <property type="evidence" value="ECO:0007669"/>
    <property type="project" value="UniProtKB-KW"/>
</dbReference>
<dbReference type="GO" id="GO:0039524">
    <property type="term" value="P:symbiont-mediated suppression of host mRNA processing"/>
    <property type="evidence" value="ECO:0007669"/>
    <property type="project" value="UniProtKB-KW"/>
</dbReference>
<dbReference type="GO" id="GO:0039580">
    <property type="term" value="P:symbiont-mediated suppression of host PKR/eIFalpha signaling"/>
    <property type="evidence" value="ECO:0007669"/>
    <property type="project" value="UniProtKB-KW"/>
</dbReference>
<dbReference type="GO" id="GO:0039502">
    <property type="term" value="P:symbiont-mediated suppression of host type I interferon-mediated signaling pathway"/>
    <property type="evidence" value="ECO:0007669"/>
    <property type="project" value="UniProtKB-KW"/>
</dbReference>
<dbReference type="FunFam" id="1.10.287.10:FF:000001">
    <property type="entry name" value="Non-structural protein 1"/>
    <property type="match status" value="1"/>
</dbReference>
<dbReference type="FunFam" id="3.30.420.330:FF:000001">
    <property type="entry name" value="Non-structural protein 1"/>
    <property type="match status" value="1"/>
</dbReference>
<dbReference type="Gene3D" id="3.30.420.330">
    <property type="entry name" value="Influenza virus non-structural protein, effector domain"/>
    <property type="match status" value="1"/>
</dbReference>
<dbReference type="Gene3D" id="1.10.287.10">
    <property type="entry name" value="S15/NS1, RNA-binding"/>
    <property type="match status" value="1"/>
</dbReference>
<dbReference type="HAMAP" id="MF_04066">
    <property type="entry name" value="INFV_NS1"/>
    <property type="match status" value="1"/>
</dbReference>
<dbReference type="InterPro" id="IPR004208">
    <property type="entry name" value="NS1"/>
</dbReference>
<dbReference type="InterPro" id="IPR000256">
    <property type="entry name" value="NS1A"/>
</dbReference>
<dbReference type="InterPro" id="IPR038064">
    <property type="entry name" value="NS1A_effect_dom-like_sf"/>
</dbReference>
<dbReference type="InterPro" id="IPR009068">
    <property type="entry name" value="uS15_NS1_RNA-bd_sf"/>
</dbReference>
<dbReference type="Pfam" id="PF00600">
    <property type="entry name" value="Flu_NS1"/>
    <property type="match status" value="1"/>
</dbReference>
<dbReference type="SUPFAM" id="SSF143021">
    <property type="entry name" value="Ns1 effector domain-like"/>
    <property type="match status" value="1"/>
</dbReference>
<dbReference type="SUPFAM" id="SSF47060">
    <property type="entry name" value="S15/NS1 RNA-binding domain"/>
    <property type="match status" value="1"/>
</dbReference>
<organism>
    <name type="scientific">Influenza A virus (strain A/Goose/Guangxi/345/2005 H5N1 genotype G)</name>
    <dbReference type="NCBI Taxonomy" id="365089"/>
    <lineage>
        <taxon>Viruses</taxon>
        <taxon>Riboviria</taxon>
        <taxon>Orthornavirae</taxon>
        <taxon>Negarnaviricota</taxon>
        <taxon>Polyploviricotina</taxon>
        <taxon>Insthoviricetes</taxon>
        <taxon>Articulavirales</taxon>
        <taxon>Orthomyxoviridae</taxon>
        <taxon>Alphainfluenzavirus</taxon>
        <taxon>Alphainfluenzavirus influenzae</taxon>
        <taxon>Influenza A virus</taxon>
    </lineage>
</organism>
<name>NS1_I05A1</name>
<protein>
    <recommendedName>
        <fullName evidence="1">Non-structural protein 1</fullName>
        <shortName evidence="1">NS1</shortName>
    </recommendedName>
    <alternativeName>
        <fullName evidence="1">NS1A</fullName>
    </alternativeName>
</protein>
<comment type="function">
    <text evidence="1">Inhibits post-transcriptional processing of cellular pre-mRNA, by binding and inhibiting two cellular proteins that are required for the 3'-end processing of cellular pre-mRNAs: the 30 kDa cleavage and polyadenylation specificity factor/CPSF4 and the poly(A)-binding protein 2/PABPN1. In turn, unprocessed 3' end pre-mRNAs accumulate in the host nucleus and are no longer exported to the cytoplasm. Cellular protein synthesis is thereby shut off very early after virus infection. Viral protein synthesis is not affected by the inhibition of the cellular 3' end processing machinery because the poly(A) tails of viral mRNAs are produced by the viral polymerase through a stuttering mechanism. Prevents the establishment of the cellular antiviral state by inhibiting TRIM25-mediated RIGI ubiquitination, which normally triggers the antiviral transduction signal that leads to the activation of type I IFN genes by transcription factors IRF3 and IRF7. Also binds poly(A) and U6 snRNA. Inhibits the integrated stress response (ISR) in the infected cell by blocking dsRNA binding by EIF2AK2/PKR and further phosphorylation of EIF2S1/EIF-2ALPHA. Stress granule formation is thus inhibited, which allows protein synthesis and viral replication.</text>
</comment>
<comment type="subunit">
    <text evidence="1">Homodimer. Interacts with host TRIM25 (via coiled coil); this interaction specifically inhibits TRIM25 multimerization and TRIM25-mediated RIGI CARD ubiquitination. Interacts with human EIF2AK2/PKR, CPSF4, IVNS1ABP and PABPN1.</text>
</comment>
<comment type="subcellular location">
    <subcellularLocation>
        <location evidence="1">Host nucleus</location>
    </subcellularLocation>
    <subcellularLocation>
        <location evidence="1">Host cytoplasm</location>
    </subcellularLocation>
    <text evidence="1">In uninfected, transfected cells, NS1 is localized in the nucleus. Only in virus infected cells, the nuclear export signal is unveiled, presumably by a viral protein, and a fraction of NS1 is exported in the cytoplasm.</text>
</comment>
<comment type="alternative products">
    <event type="alternative splicing"/>
    <isoform>
        <id>Q2F4N6-1</id>
        <name>NS1</name>
        <sequence type="displayed"/>
    </isoform>
    <isoform>
        <id>P0C5U4-1</id>
        <name>NEP</name>
        <name>NS2</name>
        <sequence type="external"/>
    </isoform>
</comment>
<comment type="domain">
    <text evidence="1">The dsRNA-binding region is required for suppression of RNA silencing.</text>
</comment>
<comment type="PTM">
    <text evidence="1">Upon interferon induction, ISGylated via host HERC5; this results in the impairment of NS1 interaction with RNA targets due to its inability to form homodimers and to interact with host EIF2AK2/PKR.</text>
</comment>
<comment type="similarity">
    <text evidence="1">Belongs to the influenza A viruses NS1 family.</text>
</comment>
<gene>
    <name evidence="1" type="primary">NS</name>
</gene>
<accession>Q2F4N6</accession>
<reference key="1">
    <citation type="journal article" date="2006" name="Proc. Natl. Acad. Sci. U.S.A.">
        <title>Emergence and predominance of an H5N1 influenza variant in China.</title>
        <authorList>
            <person name="Smith G.J."/>
            <person name="Fan X.H."/>
            <person name="Wang J."/>
            <person name="Li K.S."/>
            <person name="Qin K."/>
            <person name="Zhang J.X."/>
            <person name="Vijaykrishna D."/>
            <person name="Cheung C.L."/>
            <person name="Huang K."/>
            <person name="Rayner J.M."/>
            <person name="Peiris J.S."/>
            <person name="Chen H."/>
            <person name="Webster R.G."/>
            <person name="Guan Y."/>
        </authorList>
    </citation>
    <scope>NUCLEOTIDE SEQUENCE [GENOMIC RNA]</scope>
</reference>
<sequence length="219" mass="24878">TVSSFQVDCFLWHVRKRFADQELGDAPFLDRLRRDQKSLRGRGNTLGLDIETATRAGKQIVERILEEESDEALKMPASRYLTDMTLEEMSRDWFMLMPKQKVAGSLSIKMDQAIMDKNITLKANFNVIFDRLETLILLRAFTEEGAIVGEISPLPSLPGHTDEDVKNAIGVLIGGLEWNDNTVRVSEALQRFAWRSSDKNGRPPLPSNQKRKMARTIES</sequence>
<proteinExistence type="inferred from homology"/>
<keyword id="KW-0025">Alternative splicing</keyword>
<keyword id="KW-1262">Eukaryotic host gene expression shutoff by virus</keyword>
<keyword id="KW-1035">Host cytoplasm</keyword>
<keyword id="KW-1190">Host gene expression shutoff by virus</keyword>
<keyword id="KW-1192">Host mRNA suppression by virus</keyword>
<keyword id="KW-1048">Host nucleus</keyword>
<keyword id="KW-0945">Host-virus interaction</keyword>
<keyword id="KW-1090">Inhibition of host innate immune response by virus</keyword>
<keyword id="KW-1114">Inhibition of host interferon signaling pathway by virus</keyword>
<keyword id="KW-1102">Inhibition of host PKR by virus</keyword>
<keyword id="KW-1103">Inhibition of host pre-mRNA processing by virus</keyword>
<keyword id="KW-1088">Inhibition of host RIG-I by virus</keyword>
<keyword id="KW-1113">Inhibition of host RLR pathway by virus</keyword>
<keyword id="KW-0922">Interferon antiviral system evasion</keyword>
<keyword id="KW-0694">RNA-binding</keyword>
<keyword id="KW-0832">Ubl conjugation</keyword>
<keyword id="KW-0899">Viral immunoevasion</keyword>
<organismHost>
    <name type="scientific">Aves</name>
    <dbReference type="NCBI Taxonomy" id="8782"/>
</organismHost>
<organismHost>
    <name type="scientific">Felis catus</name>
    <name type="common">Cat</name>
    <name type="synonym">Felis silvestris catus</name>
    <dbReference type="NCBI Taxonomy" id="9685"/>
</organismHost>
<organismHost>
    <name type="scientific">Homo sapiens</name>
    <name type="common">Human</name>
    <dbReference type="NCBI Taxonomy" id="9606"/>
</organismHost>
<organismHost>
    <name type="scientific">Panthera pardus</name>
    <name type="common">Leopard</name>
    <name type="synonym">Felis pardus</name>
    <dbReference type="NCBI Taxonomy" id="9691"/>
</organismHost>
<organismHost>
    <name type="scientific">Panthera tigris</name>
    <name type="common">Tiger</name>
    <dbReference type="NCBI Taxonomy" id="9694"/>
</organismHost>
<organismHost>
    <name type="scientific">Sus scrofa</name>
    <name type="common">Pig</name>
    <dbReference type="NCBI Taxonomy" id="9823"/>
</organismHost>
<feature type="chain" id="PRO_0000311756" description="Non-structural protein 1">
    <location>
        <begin position="1" status="less than"/>
        <end position="219"/>
    </location>
</feature>
<feature type="region of interest" description="CPSF4-binding" evidence="1">
    <location>
        <begin position="171"/>
        <end position="206"/>
    </location>
</feature>
<feature type="region of interest" description="Disordered" evidence="2">
    <location>
        <begin position="196"/>
        <end position="219"/>
    </location>
</feature>
<feature type="short sequence motif" description="Nuclear localization signal" evidence="1">
    <location>
        <begin position="30"/>
        <end position="34"/>
    </location>
</feature>
<feature type="short sequence motif" description="Nuclear export signal" evidence="1">
    <location>
        <begin position="128"/>
        <end position="137"/>
    </location>
</feature>
<feature type="compositionally biased region" description="Basic residues" evidence="2">
    <location>
        <begin position="209"/>
        <end position="219"/>
    </location>
</feature>
<feature type="non-terminal residue">
    <location>
        <position position="1"/>
    </location>
</feature>